<reference key="1">
    <citation type="journal article" date="2005" name="J. Bacteriol.">
        <title>Swine and poultry pathogens: the complete genome sequences of two strains of Mycoplasma hyopneumoniae and a strain of Mycoplasma synoviae.</title>
        <authorList>
            <person name="Vasconcelos A.T.R."/>
            <person name="Ferreira H.B."/>
            <person name="Bizarro C.V."/>
            <person name="Bonatto S.L."/>
            <person name="Carvalho M.O."/>
            <person name="Pinto P.M."/>
            <person name="Almeida D.F."/>
            <person name="Almeida L.G.P."/>
            <person name="Almeida R."/>
            <person name="Alves-Junior L."/>
            <person name="Assuncao E.N."/>
            <person name="Azevedo V.A.C."/>
            <person name="Bogo M.R."/>
            <person name="Brigido M.M."/>
            <person name="Brocchi M."/>
            <person name="Burity H.A."/>
            <person name="Camargo A.A."/>
            <person name="Camargo S.S."/>
            <person name="Carepo M.S."/>
            <person name="Carraro D.M."/>
            <person name="de Mattos Cascardo J.C."/>
            <person name="Castro L.A."/>
            <person name="Cavalcanti G."/>
            <person name="Chemale G."/>
            <person name="Collevatti R.G."/>
            <person name="Cunha C.W."/>
            <person name="Dallagiovanna B."/>
            <person name="Dambros B.P."/>
            <person name="Dellagostin O.A."/>
            <person name="Falcao C."/>
            <person name="Fantinatti-Garboggini F."/>
            <person name="Felipe M.S.S."/>
            <person name="Fiorentin L."/>
            <person name="Franco G.R."/>
            <person name="Freitas N.S.A."/>
            <person name="Frias D."/>
            <person name="Grangeiro T.B."/>
            <person name="Grisard E.C."/>
            <person name="Guimaraes C.T."/>
            <person name="Hungria M."/>
            <person name="Jardim S.N."/>
            <person name="Krieger M.A."/>
            <person name="Laurino J.P."/>
            <person name="Lima L.F.A."/>
            <person name="Lopes M.I."/>
            <person name="Loreto E.L.S."/>
            <person name="Madeira H.M.F."/>
            <person name="Manfio G.P."/>
            <person name="Maranhao A.Q."/>
            <person name="Martinkovics C.T."/>
            <person name="Medeiros S.R.B."/>
            <person name="Moreira M.A.M."/>
            <person name="Neiva M."/>
            <person name="Ramalho-Neto C.E."/>
            <person name="Nicolas M.F."/>
            <person name="Oliveira S.C."/>
            <person name="Paixao R.F.C."/>
            <person name="Pedrosa F.O."/>
            <person name="Pena S.D.J."/>
            <person name="Pereira M."/>
            <person name="Pereira-Ferrari L."/>
            <person name="Piffer I."/>
            <person name="Pinto L.S."/>
            <person name="Potrich D.P."/>
            <person name="Salim A.C.M."/>
            <person name="Santos F.R."/>
            <person name="Schmitt R."/>
            <person name="Schneider M.P.C."/>
            <person name="Schrank A."/>
            <person name="Schrank I.S."/>
            <person name="Schuck A.F."/>
            <person name="Seuanez H.N."/>
            <person name="Silva D.W."/>
            <person name="Silva R."/>
            <person name="Silva S.C."/>
            <person name="Soares C.M.A."/>
            <person name="Souza K.R.L."/>
            <person name="Souza R.C."/>
            <person name="Staats C.C."/>
            <person name="Steffens M.B.R."/>
            <person name="Teixeira S.M.R."/>
            <person name="Urmenyi T.P."/>
            <person name="Vainstein M.H."/>
            <person name="Zuccherato L.W."/>
            <person name="Simpson A.J.G."/>
            <person name="Zaha A."/>
        </authorList>
    </citation>
    <scope>NUCLEOTIDE SEQUENCE [LARGE SCALE GENOMIC DNA]</scope>
    <source>
        <strain>53</strain>
    </source>
</reference>
<name>EFTU_MYCS5</name>
<evidence type="ECO:0000250" key="1"/>
<evidence type="ECO:0000255" key="2">
    <source>
        <dbReference type="HAMAP-Rule" id="MF_00118"/>
    </source>
</evidence>
<dbReference type="EC" id="3.6.5.3" evidence="2"/>
<dbReference type="EMBL" id="AE017245">
    <property type="protein sequence ID" value="AAZ44074.1"/>
    <property type="molecule type" value="Genomic_DNA"/>
</dbReference>
<dbReference type="RefSeq" id="WP_011283803.1">
    <property type="nucleotide sequence ID" value="NC_007294.1"/>
</dbReference>
<dbReference type="SMR" id="Q4A597"/>
<dbReference type="STRING" id="262723.MS53_0667"/>
<dbReference type="KEGG" id="msy:MS53_0667"/>
<dbReference type="eggNOG" id="COG0050">
    <property type="taxonomic scope" value="Bacteria"/>
</dbReference>
<dbReference type="HOGENOM" id="CLU_007265_0_1_14"/>
<dbReference type="OrthoDB" id="9804504at2"/>
<dbReference type="Proteomes" id="UP000000549">
    <property type="component" value="Chromosome"/>
</dbReference>
<dbReference type="GO" id="GO:0005829">
    <property type="term" value="C:cytosol"/>
    <property type="evidence" value="ECO:0007669"/>
    <property type="project" value="TreeGrafter"/>
</dbReference>
<dbReference type="GO" id="GO:0005525">
    <property type="term" value="F:GTP binding"/>
    <property type="evidence" value="ECO:0007669"/>
    <property type="project" value="UniProtKB-UniRule"/>
</dbReference>
<dbReference type="GO" id="GO:0003924">
    <property type="term" value="F:GTPase activity"/>
    <property type="evidence" value="ECO:0007669"/>
    <property type="project" value="InterPro"/>
</dbReference>
<dbReference type="GO" id="GO:0003746">
    <property type="term" value="F:translation elongation factor activity"/>
    <property type="evidence" value="ECO:0007669"/>
    <property type="project" value="UniProtKB-UniRule"/>
</dbReference>
<dbReference type="CDD" id="cd01884">
    <property type="entry name" value="EF_Tu"/>
    <property type="match status" value="1"/>
</dbReference>
<dbReference type="CDD" id="cd03697">
    <property type="entry name" value="EFTU_II"/>
    <property type="match status" value="1"/>
</dbReference>
<dbReference type="CDD" id="cd03707">
    <property type="entry name" value="EFTU_III"/>
    <property type="match status" value="1"/>
</dbReference>
<dbReference type="FunFam" id="2.40.30.10:FF:000001">
    <property type="entry name" value="Elongation factor Tu"/>
    <property type="match status" value="1"/>
</dbReference>
<dbReference type="FunFam" id="3.40.50.300:FF:000003">
    <property type="entry name" value="Elongation factor Tu"/>
    <property type="match status" value="1"/>
</dbReference>
<dbReference type="Gene3D" id="3.40.50.300">
    <property type="entry name" value="P-loop containing nucleotide triphosphate hydrolases"/>
    <property type="match status" value="1"/>
</dbReference>
<dbReference type="Gene3D" id="2.40.30.10">
    <property type="entry name" value="Translation factors"/>
    <property type="match status" value="2"/>
</dbReference>
<dbReference type="HAMAP" id="MF_00118_B">
    <property type="entry name" value="EF_Tu_B"/>
    <property type="match status" value="1"/>
</dbReference>
<dbReference type="InterPro" id="IPR041709">
    <property type="entry name" value="EF-Tu_GTP-bd"/>
</dbReference>
<dbReference type="InterPro" id="IPR050055">
    <property type="entry name" value="EF-Tu_GTPase"/>
</dbReference>
<dbReference type="InterPro" id="IPR004161">
    <property type="entry name" value="EFTu-like_2"/>
</dbReference>
<dbReference type="InterPro" id="IPR033720">
    <property type="entry name" value="EFTU_2"/>
</dbReference>
<dbReference type="InterPro" id="IPR031157">
    <property type="entry name" value="G_TR_CS"/>
</dbReference>
<dbReference type="InterPro" id="IPR027417">
    <property type="entry name" value="P-loop_NTPase"/>
</dbReference>
<dbReference type="InterPro" id="IPR005225">
    <property type="entry name" value="Small_GTP-bd"/>
</dbReference>
<dbReference type="InterPro" id="IPR000795">
    <property type="entry name" value="T_Tr_GTP-bd_dom"/>
</dbReference>
<dbReference type="InterPro" id="IPR009000">
    <property type="entry name" value="Transl_B-barrel_sf"/>
</dbReference>
<dbReference type="InterPro" id="IPR009001">
    <property type="entry name" value="Transl_elong_EF1A/Init_IF2_C"/>
</dbReference>
<dbReference type="InterPro" id="IPR004541">
    <property type="entry name" value="Transl_elong_EFTu/EF1A_bac/org"/>
</dbReference>
<dbReference type="InterPro" id="IPR004160">
    <property type="entry name" value="Transl_elong_EFTu/EF1A_C"/>
</dbReference>
<dbReference type="NCBIfam" id="TIGR00485">
    <property type="entry name" value="EF-Tu"/>
    <property type="match status" value="1"/>
</dbReference>
<dbReference type="NCBIfam" id="NF000766">
    <property type="entry name" value="PRK00049.1"/>
    <property type="match status" value="1"/>
</dbReference>
<dbReference type="NCBIfam" id="NF009372">
    <property type="entry name" value="PRK12735.1"/>
    <property type="match status" value="1"/>
</dbReference>
<dbReference type="NCBIfam" id="NF009373">
    <property type="entry name" value="PRK12736.1"/>
    <property type="match status" value="1"/>
</dbReference>
<dbReference type="NCBIfam" id="TIGR00231">
    <property type="entry name" value="small_GTP"/>
    <property type="match status" value="1"/>
</dbReference>
<dbReference type="PANTHER" id="PTHR43721:SF22">
    <property type="entry name" value="ELONGATION FACTOR TU, MITOCHONDRIAL"/>
    <property type="match status" value="1"/>
</dbReference>
<dbReference type="PANTHER" id="PTHR43721">
    <property type="entry name" value="ELONGATION FACTOR TU-RELATED"/>
    <property type="match status" value="1"/>
</dbReference>
<dbReference type="Pfam" id="PF00009">
    <property type="entry name" value="GTP_EFTU"/>
    <property type="match status" value="1"/>
</dbReference>
<dbReference type="Pfam" id="PF03144">
    <property type="entry name" value="GTP_EFTU_D2"/>
    <property type="match status" value="1"/>
</dbReference>
<dbReference type="Pfam" id="PF03143">
    <property type="entry name" value="GTP_EFTU_D3"/>
    <property type="match status" value="1"/>
</dbReference>
<dbReference type="PRINTS" id="PR00315">
    <property type="entry name" value="ELONGATNFCT"/>
</dbReference>
<dbReference type="SUPFAM" id="SSF50465">
    <property type="entry name" value="EF-Tu/eEF-1alpha/eIF2-gamma C-terminal domain"/>
    <property type="match status" value="1"/>
</dbReference>
<dbReference type="SUPFAM" id="SSF52540">
    <property type="entry name" value="P-loop containing nucleoside triphosphate hydrolases"/>
    <property type="match status" value="1"/>
</dbReference>
<dbReference type="SUPFAM" id="SSF50447">
    <property type="entry name" value="Translation proteins"/>
    <property type="match status" value="1"/>
</dbReference>
<dbReference type="PROSITE" id="PS00301">
    <property type="entry name" value="G_TR_1"/>
    <property type="match status" value="1"/>
</dbReference>
<dbReference type="PROSITE" id="PS51722">
    <property type="entry name" value="G_TR_2"/>
    <property type="match status" value="1"/>
</dbReference>
<gene>
    <name evidence="2" type="primary">tuf</name>
    <name type="ordered locus">MS53_0667</name>
</gene>
<comment type="function">
    <text evidence="2">GTP hydrolase that promotes the GTP-dependent binding of aminoacyl-tRNA to the A-site of ribosomes during protein biosynthesis.</text>
</comment>
<comment type="catalytic activity">
    <reaction evidence="2">
        <text>GTP + H2O = GDP + phosphate + H(+)</text>
        <dbReference type="Rhea" id="RHEA:19669"/>
        <dbReference type="ChEBI" id="CHEBI:15377"/>
        <dbReference type="ChEBI" id="CHEBI:15378"/>
        <dbReference type="ChEBI" id="CHEBI:37565"/>
        <dbReference type="ChEBI" id="CHEBI:43474"/>
        <dbReference type="ChEBI" id="CHEBI:58189"/>
        <dbReference type="EC" id="3.6.5.3"/>
    </reaction>
    <physiologicalReaction direction="left-to-right" evidence="2">
        <dbReference type="Rhea" id="RHEA:19670"/>
    </physiologicalReaction>
</comment>
<comment type="subunit">
    <text evidence="2">Monomer.</text>
</comment>
<comment type="subcellular location">
    <subcellularLocation>
        <location evidence="2">Cytoplasm</location>
    </subcellularLocation>
</comment>
<comment type="similarity">
    <text evidence="2">Belongs to the TRAFAC class translation factor GTPase superfamily. Classic translation factor GTPase family. EF-Tu/EF-1A subfamily.</text>
</comment>
<accession>Q4A597</accession>
<protein>
    <recommendedName>
        <fullName evidence="2">Elongation factor Tu</fullName>
        <shortName evidence="2">EF-Tu</shortName>
        <ecNumber evidence="2">3.6.5.3</ecNumber>
    </recommendedName>
</protein>
<proteinExistence type="inferred from homology"/>
<feature type="chain" id="PRO_1000015703" description="Elongation factor Tu">
    <location>
        <begin position="1"/>
        <end position="394"/>
    </location>
</feature>
<feature type="domain" description="tr-type G">
    <location>
        <begin position="10"/>
        <end position="204"/>
    </location>
</feature>
<feature type="region of interest" description="G1" evidence="1">
    <location>
        <begin position="19"/>
        <end position="26"/>
    </location>
</feature>
<feature type="region of interest" description="G2" evidence="1">
    <location>
        <begin position="60"/>
        <end position="64"/>
    </location>
</feature>
<feature type="region of interest" description="G3" evidence="1">
    <location>
        <begin position="81"/>
        <end position="84"/>
    </location>
</feature>
<feature type="region of interest" description="G4" evidence="1">
    <location>
        <begin position="136"/>
        <end position="139"/>
    </location>
</feature>
<feature type="region of interest" description="G5" evidence="1">
    <location>
        <begin position="174"/>
        <end position="176"/>
    </location>
</feature>
<feature type="binding site" evidence="2">
    <location>
        <begin position="19"/>
        <end position="26"/>
    </location>
    <ligand>
        <name>GTP</name>
        <dbReference type="ChEBI" id="CHEBI:37565"/>
    </ligand>
</feature>
<feature type="binding site" evidence="2">
    <location>
        <position position="26"/>
    </location>
    <ligand>
        <name>Mg(2+)</name>
        <dbReference type="ChEBI" id="CHEBI:18420"/>
    </ligand>
</feature>
<feature type="binding site" evidence="2">
    <location>
        <begin position="81"/>
        <end position="85"/>
    </location>
    <ligand>
        <name>GTP</name>
        <dbReference type="ChEBI" id="CHEBI:37565"/>
    </ligand>
</feature>
<feature type="binding site" evidence="2">
    <location>
        <begin position="136"/>
        <end position="139"/>
    </location>
    <ligand>
        <name>GTP</name>
        <dbReference type="ChEBI" id="CHEBI:37565"/>
    </ligand>
</feature>
<keyword id="KW-0963">Cytoplasm</keyword>
<keyword id="KW-0251">Elongation factor</keyword>
<keyword id="KW-0342">GTP-binding</keyword>
<keyword id="KW-0378">Hydrolase</keyword>
<keyword id="KW-0460">Magnesium</keyword>
<keyword id="KW-0479">Metal-binding</keyword>
<keyword id="KW-0547">Nucleotide-binding</keyword>
<keyword id="KW-0648">Protein biosynthesis</keyword>
<keyword id="KW-1185">Reference proteome</keyword>
<organism>
    <name type="scientific">Mycoplasmopsis synoviae (strain 53)</name>
    <name type="common">Mycoplasma synoviae</name>
    <dbReference type="NCBI Taxonomy" id="262723"/>
    <lineage>
        <taxon>Bacteria</taxon>
        <taxon>Bacillati</taxon>
        <taxon>Mycoplasmatota</taxon>
        <taxon>Mycoplasmoidales</taxon>
        <taxon>Metamycoplasmataceae</taxon>
        <taxon>Mycoplasmopsis</taxon>
    </lineage>
</organism>
<sequence length="394" mass="43230">MAKLDFDRSKEHVNVGTIGHVDHGKTTLTAAIATVLSKKGLSEARDYASIDNAPEEKARGITINTSHIEYQTEKRHYAHVDCPGHADYVKNMITGAAQMDGAILVVAATDGPMPQTREHILLSKQVGVPRMVVFLNKCDMVDDEEMIGLVEMEIRDLLSEYGFDGDNAPIVRGSALKALEGDAVYEDKILELMNAVDTYIENPVKELDKPFLMAVEDVFTITGRGTVATGRVERGRLTLNEEVEIVGLKPTKKTVVTGIEMFRKNLKEALAGDNAGLLLRGVNRDDVERGQVLAKPGSIVPHTEFEAAIYVLKKEEGGRHTPFFKNYKPQFYFRTTDVTGGVEFEAGREMVMPGENVNLKVKLISPIAVEEGTKFSIREGGRTVGAGSVTKIVK</sequence>